<comment type="function">
    <text evidence="1">Binds to actin and affects the structure of the cytoskeleton. At high concentrations, profilin prevents the polymerization of actin, whereas it enhances it at low concentrations (By similarity).</text>
</comment>
<comment type="subunit">
    <text evidence="1">Occurs in many kinds of cells as a complex with monomeric actin in a 1:1 ratio.</text>
</comment>
<comment type="subcellular location">
    <subcellularLocation>
        <location evidence="1">Cytoplasm</location>
        <location evidence="1">Cytoskeleton</location>
    </subcellularLocation>
</comment>
<comment type="PTM">
    <text evidence="1">Phosphorylated by MAP kinases.</text>
</comment>
<comment type="polymorphism">
    <text>Several isoforms of the allergen exist due to polymorphism.</text>
</comment>
<comment type="allergen">
    <text>Causes an allergic reaction in human.</text>
</comment>
<comment type="miscellaneous">
    <text evidence="3">The variability of the residues taking part of IgE-binding epitopes might be responsible of the difference in cross-reactivity among olive pollen cultivars, and between distantly related pollen species, leading to a variable range of allergy reactions among atopic patients.</text>
</comment>
<comment type="similarity">
    <text evidence="2">Belongs to the profilin family.</text>
</comment>
<keyword id="KW-0009">Actin-binding</keyword>
<keyword id="KW-0020">Allergen</keyword>
<keyword id="KW-0963">Cytoplasm</keyword>
<keyword id="KW-0206">Cytoskeleton</keyword>
<keyword id="KW-1015">Disulfide bond</keyword>
<keyword id="KW-0597">Phosphoprotein</keyword>
<accession>A4GDR7</accession>
<feature type="initiator methionine" description="Removed" evidence="1">
    <location>
        <position position="1"/>
    </location>
</feature>
<feature type="chain" id="PRO_0000425014" description="Profilin-1">
    <location>
        <begin position="2"/>
        <end position="134"/>
    </location>
</feature>
<feature type="short sequence motif" description="Involved in PIP2 interaction">
    <location>
        <begin position="84"/>
        <end position="100"/>
    </location>
</feature>
<feature type="modified residue" description="Phosphothreonine" evidence="1">
    <location>
        <position position="114"/>
    </location>
</feature>
<feature type="disulfide bond" evidence="3">
    <location>
        <begin position="13"/>
        <end position="118"/>
    </location>
</feature>
<organism>
    <name type="scientific">Olea europaea</name>
    <name type="common">Common olive</name>
    <dbReference type="NCBI Taxonomy" id="4146"/>
    <lineage>
        <taxon>Eukaryota</taxon>
        <taxon>Viridiplantae</taxon>
        <taxon>Streptophyta</taxon>
        <taxon>Embryophyta</taxon>
        <taxon>Tracheophyta</taxon>
        <taxon>Spermatophyta</taxon>
        <taxon>Magnoliopsida</taxon>
        <taxon>eudicotyledons</taxon>
        <taxon>Gunneridae</taxon>
        <taxon>Pentapetalae</taxon>
        <taxon>asterids</taxon>
        <taxon>lamiids</taxon>
        <taxon>Lamiales</taxon>
        <taxon>Oleaceae</taxon>
        <taxon>Oleeae</taxon>
        <taxon>Olea</taxon>
    </lineage>
</organism>
<reference key="1">
    <citation type="journal article" date="2012" name="PLoS ONE">
        <title>Characterization of profilin polymorphism in pollen with a focus on multifunctionality.</title>
        <authorList>
            <person name="Jimenez-Lopez J.C."/>
            <person name="Morales S."/>
            <person name="Castro A.J."/>
            <person name="Volkmann D."/>
            <person name="Rodriguez-Garcia M.I."/>
            <person name="Alche Jde D."/>
        </authorList>
    </citation>
    <scope>NUCLEOTIDE SEQUENCE [MRNA]</scope>
    <scope>POLYMORPHISM</scope>
    <source>
        <strain>cv. Blanqueta</strain>
    </source>
</reference>
<reference key="2">
    <citation type="journal article" date="2013" name="PLoS ONE">
        <title>Analysis of the effects of polymorphism on pollen profilin structural functionality and the generation of conformational, T- and B-cell epitopes.</title>
        <authorList>
            <person name="Jimenez-Lopez J.C."/>
            <person name="Rodriguez-Garcia M.I."/>
            <person name="Alche J.D."/>
        </authorList>
    </citation>
    <scope>3D-STRUCTURE MODELING</scope>
    <scope>DISULFIDE BOND</scope>
</reference>
<proteinExistence type="evidence at protein level"/>
<name>PROAW_OLEEU</name>
<protein>
    <recommendedName>
        <fullName>Profilin-1</fullName>
    </recommendedName>
    <alternativeName>
        <fullName>Pollen allergen Ole e 2</fullName>
    </alternativeName>
    <allergenName>Ole e 2</allergenName>
</protein>
<sequence length="134" mass="14503">MSWQAYVDDHLMCDIEGHEDHRLTAAAIVGHDGSVWAQSATFPQFKPEEMNGIMTDFNEPGHLAPTGLHLGGTKYMVIQGEAGAVIRGKKGSGGITIKKTGQALVFGIYEEPVTPGQCNMVVERLGDYLLEQGM</sequence>
<dbReference type="EMBL" id="DQ138335">
    <property type="protein sequence ID" value="AAZ30413.1"/>
    <property type="molecule type" value="mRNA"/>
</dbReference>
<dbReference type="SMR" id="A4GDR7"/>
<dbReference type="Allergome" id="490">
    <property type="allergen name" value="Ole e 2"/>
</dbReference>
<dbReference type="GO" id="GO:0005938">
    <property type="term" value="C:cell cortex"/>
    <property type="evidence" value="ECO:0007669"/>
    <property type="project" value="TreeGrafter"/>
</dbReference>
<dbReference type="GO" id="GO:0005856">
    <property type="term" value="C:cytoskeleton"/>
    <property type="evidence" value="ECO:0007669"/>
    <property type="project" value="UniProtKB-SubCell"/>
</dbReference>
<dbReference type="GO" id="GO:0003785">
    <property type="term" value="F:actin monomer binding"/>
    <property type="evidence" value="ECO:0007669"/>
    <property type="project" value="TreeGrafter"/>
</dbReference>
<dbReference type="CDD" id="cd00148">
    <property type="entry name" value="PROF"/>
    <property type="match status" value="1"/>
</dbReference>
<dbReference type="FunFam" id="3.30.450.30:FF:000001">
    <property type="entry name" value="Profilin"/>
    <property type="match status" value="1"/>
</dbReference>
<dbReference type="Gene3D" id="3.30.450.30">
    <property type="entry name" value="Dynein light chain 2a, cytoplasmic"/>
    <property type="match status" value="1"/>
</dbReference>
<dbReference type="InterPro" id="IPR048278">
    <property type="entry name" value="PFN"/>
</dbReference>
<dbReference type="InterPro" id="IPR005455">
    <property type="entry name" value="PFN_euk"/>
</dbReference>
<dbReference type="InterPro" id="IPR036140">
    <property type="entry name" value="PFN_sf"/>
</dbReference>
<dbReference type="InterPro" id="IPR027310">
    <property type="entry name" value="Profilin_CS"/>
</dbReference>
<dbReference type="PANTHER" id="PTHR11604">
    <property type="entry name" value="PROFILIN"/>
    <property type="match status" value="1"/>
</dbReference>
<dbReference type="PANTHER" id="PTHR11604:SF25">
    <property type="entry name" value="PROFILIN-5"/>
    <property type="match status" value="1"/>
</dbReference>
<dbReference type="Pfam" id="PF00235">
    <property type="entry name" value="Profilin"/>
    <property type="match status" value="1"/>
</dbReference>
<dbReference type="PRINTS" id="PR00392">
    <property type="entry name" value="PROFILIN"/>
</dbReference>
<dbReference type="PRINTS" id="PR01640">
    <property type="entry name" value="PROFILINPLNT"/>
</dbReference>
<dbReference type="SMART" id="SM00392">
    <property type="entry name" value="PROF"/>
    <property type="match status" value="1"/>
</dbReference>
<dbReference type="SUPFAM" id="SSF55770">
    <property type="entry name" value="Profilin (actin-binding protein)"/>
    <property type="match status" value="1"/>
</dbReference>
<dbReference type="PROSITE" id="PS00414">
    <property type="entry name" value="PROFILIN"/>
    <property type="match status" value="1"/>
</dbReference>
<evidence type="ECO:0000250" key="1"/>
<evidence type="ECO:0000305" key="2"/>
<evidence type="ECO:0000305" key="3">
    <source>
    </source>
</evidence>